<name>GBRR3_HUMAN</name>
<sequence length="467" mass="54272">MVLAFQLVSFTYIWIILKPNVCAASNIKMTHQRCSSSMKQTCKQETRMKKDDSTKARPQKYEQLLHIEDNDFAMRPGFGGSPVPVGIDVHVESIDSISETNMDFTMTFYLRHYWKDERLSFPSTANKSMTFDHRLTRKIWVPDIFFVHSKRSFIHDTTMENIMLRVHPDGNVLLSLRITVSAMCFMDFSRFPLDTQNCSLELESYAYNEDDLMLYWKHGNKSLNTEEHMSLSQFFIEDFSASSGLAFYSSTGWYNRLFINFVLRRHVFFFVLQTYFPAILMVMLSWVSFWIDRRAVPARVSLGITTVLTMSTIITAVSASMPQVSYLKAVDVYLWVSSLFVFLSVIEYAAVNYLTTVEERKQFKKTGKISRMYNIDAVQAMAFDGCYHDSEIDMDQTSLSLNSEDFMRRKSICSPSTDSSRIKRRKSLGGHVGRIILENNHVIDTYSRILFPIVYILFNLFYWGVYV</sequence>
<keyword id="KW-1003">Cell membrane</keyword>
<keyword id="KW-0868">Chloride</keyword>
<keyword id="KW-0869">Chloride channel</keyword>
<keyword id="KW-1015">Disulfide bond</keyword>
<keyword id="KW-0325">Glycoprotein</keyword>
<keyword id="KW-0407">Ion channel</keyword>
<keyword id="KW-0406">Ion transport</keyword>
<keyword id="KW-0472">Membrane</keyword>
<keyword id="KW-0628">Postsynaptic cell membrane</keyword>
<keyword id="KW-1185">Reference proteome</keyword>
<keyword id="KW-0732">Signal</keyword>
<keyword id="KW-0770">Synapse</keyword>
<keyword id="KW-0812">Transmembrane</keyword>
<keyword id="KW-1133">Transmembrane helix</keyword>
<keyword id="KW-0813">Transport</keyword>
<evidence type="ECO:0000250" key="1">
    <source>
        <dbReference type="UniProtKB" id="P24046"/>
    </source>
</evidence>
<evidence type="ECO:0000250" key="2">
    <source>
        <dbReference type="UniProtKB" id="P28472"/>
    </source>
</evidence>
<evidence type="ECO:0000250" key="3">
    <source>
        <dbReference type="UniProtKB" id="P50573"/>
    </source>
</evidence>
<evidence type="ECO:0000255" key="4"/>
<evidence type="ECO:0000269" key="5">
    <source>
    </source>
</evidence>
<evidence type="ECO:0000303" key="6">
    <source>
    </source>
</evidence>
<evidence type="ECO:0000305" key="7"/>
<evidence type="ECO:0000312" key="8">
    <source>
        <dbReference type="HGNC" id="HGNC:17969"/>
    </source>
</evidence>
<protein>
    <recommendedName>
        <fullName>Gamma-aminobutyric acid receptor subunit rho-3</fullName>
    </recommendedName>
    <alternativeName>
        <fullName evidence="3">GABA(A) receptor subunit rho-3</fullName>
        <shortName>GABAAR subunit rho-3</shortName>
    </alternativeName>
    <alternativeName>
        <fullName evidence="6">GABA(C) receptor</fullName>
    </alternativeName>
</protein>
<dbReference type="EMBL" id="AC026100">
    <property type="status" value="NOT_ANNOTATED_CDS"/>
    <property type="molecule type" value="Genomic_DNA"/>
</dbReference>
<dbReference type="EMBL" id="Y18994">
    <property type="protein sequence ID" value="CAB60835.1"/>
    <property type="molecule type" value="Genomic_DNA"/>
</dbReference>
<dbReference type="CCDS" id="CCDS54617.1"/>
<dbReference type="RefSeq" id="NP_001099050.1">
    <property type="nucleotide sequence ID" value="NM_001105580.3"/>
</dbReference>
<dbReference type="SMR" id="A8MPY1"/>
<dbReference type="FunCoup" id="A8MPY1">
    <property type="interactions" value="519"/>
</dbReference>
<dbReference type="STRING" id="9606.ENSP00000481321"/>
<dbReference type="BindingDB" id="A8MPY1"/>
<dbReference type="ChEMBL" id="CHEMBL2109242"/>
<dbReference type="DrugBank" id="DB01567">
    <property type="generic name" value="Fludiazepam"/>
</dbReference>
<dbReference type="DrugBank" id="DB16754">
    <property type="generic name" value="TPMPA"/>
</dbReference>
<dbReference type="GlyCosmos" id="A8MPY1">
    <property type="glycosylation" value="1 site, No reported glycans"/>
</dbReference>
<dbReference type="GlyGen" id="A8MPY1">
    <property type="glycosylation" value="1 site, 1 N-linked glycan (1 site)"/>
</dbReference>
<dbReference type="iPTMnet" id="A8MPY1"/>
<dbReference type="PhosphoSitePlus" id="A8MPY1"/>
<dbReference type="BioMuta" id="GABRR3"/>
<dbReference type="MassIVE" id="A8MPY1"/>
<dbReference type="PaxDb" id="9606-ENSP00000481321"/>
<dbReference type="Antibodypedia" id="73148">
    <property type="antibodies" value="44 antibodies from 10 providers"/>
</dbReference>
<dbReference type="DNASU" id="200959"/>
<dbReference type="Ensembl" id="ENST00000472788.6">
    <property type="protein sequence ID" value="ENSP00000420790.1"/>
    <property type="gene ID" value="ENSG00000183185.10"/>
</dbReference>
<dbReference type="GeneID" id="200959"/>
<dbReference type="KEGG" id="hsa:200959"/>
<dbReference type="MANE-Select" id="ENST00000472788.6">
    <property type="protein sequence ID" value="ENSP00000420790.1"/>
    <property type="RefSeq nucleotide sequence ID" value="NM_001105580.3"/>
    <property type="RefSeq protein sequence ID" value="NP_001099050.1"/>
</dbReference>
<dbReference type="UCSC" id="uc021xbo.2">
    <property type="organism name" value="human"/>
</dbReference>
<dbReference type="AGR" id="HGNC:17969"/>
<dbReference type="CTD" id="200959"/>
<dbReference type="DisGeNET" id="200959"/>
<dbReference type="GeneCards" id="GABRR3"/>
<dbReference type="HGNC" id="HGNC:17969">
    <property type="gene designation" value="GABRR3"/>
</dbReference>
<dbReference type="HPA" id="ENSG00000183185">
    <property type="expression patterns" value="Tissue enriched (retina)"/>
</dbReference>
<dbReference type="MalaCards" id="GABRR3"/>
<dbReference type="MIM" id="618668">
    <property type="type" value="gene"/>
</dbReference>
<dbReference type="neXtProt" id="NX_A8MPY1"/>
<dbReference type="OpenTargets" id="ENSG00000183185"/>
<dbReference type="PharmGKB" id="PA134952133"/>
<dbReference type="VEuPathDB" id="HostDB:ENSG00000183185"/>
<dbReference type="eggNOG" id="KOG3643">
    <property type="taxonomic scope" value="Eukaryota"/>
</dbReference>
<dbReference type="GeneTree" id="ENSGT00940000159906"/>
<dbReference type="HOGENOM" id="CLU_010920_0_1_1"/>
<dbReference type="InParanoid" id="A8MPY1"/>
<dbReference type="OMA" id="STKVWPL"/>
<dbReference type="OrthoDB" id="442503at2759"/>
<dbReference type="PAN-GO" id="A8MPY1">
    <property type="GO annotations" value="13 GO annotations based on evolutionary models"/>
</dbReference>
<dbReference type="PhylomeDB" id="A8MPY1"/>
<dbReference type="PathwayCommons" id="A8MPY1"/>
<dbReference type="Reactome" id="R-HSA-977443">
    <property type="pathway name" value="GABA receptor activation"/>
</dbReference>
<dbReference type="BioGRID-ORCS" id="200959">
    <property type="hits" value="4 hits in 242 CRISPR screens"/>
</dbReference>
<dbReference type="ChiTaRS" id="GABRR3">
    <property type="organism name" value="human"/>
</dbReference>
<dbReference type="GeneWiki" id="GABRR3"/>
<dbReference type="GenomeRNAi" id="200959"/>
<dbReference type="Pharos" id="A8MPY1">
    <property type="development level" value="Tbio"/>
</dbReference>
<dbReference type="PRO" id="PR:A8MPY1"/>
<dbReference type="Proteomes" id="UP000005640">
    <property type="component" value="Chromosome 3"/>
</dbReference>
<dbReference type="RNAct" id="A8MPY1">
    <property type="molecule type" value="protein"/>
</dbReference>
<dbReference type="Bgee" id="ENSG00000183185">
    <property type="expression patterns" value="Expressed in male germ line stem cell (sensu Vertebrata) in testis and 7 other cell types or tissues"/>
</dbReference>
<dbReference type="GO" id="GO:0034707">
    <property type="term" value="C:chloride channel complex"/>
    <property type="evidence" value="ECO:0007669"/>
    <property type="project" value="UniProtKB-KW"/>
</dbReference>
<dbReference type="GO" id="GO:1902711">
    <property type="term" value="C:GABA-A receptor complex"/>
    <property type="evidence" value="ECO:0000318"/>
    <property type="project" value="GO_Central"/>
</dbReference>
<dbReference type="GO" id="GO:0098982">
    <property type="term" value="C:GABA-ergic synapse"/>
    <property type="evidence" value="ECO:0007669"/>
    <property type="project" value="Ensembl"/>
</dbReference>
<dbReference type="GO" id="GO:0005886">
    <property type="term" value="C:plasma membrane"/>
    <property type="evidence" value="ECO:0000304"/>
    <property type="project" value="Reactome"/>
</dbReference>
<dbReference type="GO" id="GO:0045211">
    <property type="term" value="C:postsynaptic membrane"/>
    <property type="evidence" value="ECO:0007669"/>
    <property type="project" value="UniProtKB-SubCell"/>
</dbReference>
<dbReference type="GO" id="GO:0004890">
    <property type="term" value="F:GABA-A receptor activity"/>
    <property type="evidence" value="ECO:0000250"/>
    <property type="project" value="UniProtKB"/>
</dbReference>
<dbReference type="GO" id="GO:0022851">
    <property type="term" value="F:GABA-gated chloride ion channel activity"/>
    <property type="evidence" value="ECO:0000250"/>
    <property type="project" value="UniProtKB"/>
</dbReference>
<dbReference type="GO" id="GO:0007268">
    <property type="term" value="P:chemical synaptic transmission"/>
    <property type="evidence" value="ECO:0000303"/>
    <property type="project" value="UniProtKB"/>
</dbReference>
<dbReference type="GO" id="GO:1902476">
    <property type="term" value="P:chloride transmembrane transport"/>
    <property type="evidence" value="ECO:0000318"/>
    <property type="project" value="GO_Central"/>
</dbReference>
<dbReference type="GO" id="GO:0007214">
    <property type="term" value="P:gamma-aminobutyric acid signaling pathway"/>
    <property type="evidence" value="ECO:0000303"/>
    <property type="project" value="UniProtKB"/>
</dbReference>
<dbReference type="CDD" id="cd19005">
    <property type="entry name" value="LGIC_ECD_GABAAR_rho"/>
    <property type="match status" value="1"/>
</dbReference>
<dbReference type="CDD" id="cd19059">
    <property type="entry name" value="LGIC_TM_GABAAR_rho"/>
    <property type="match status" value="1"/>
</dbReference>
<dbReference type="FunFam" id="2.70.170.10:FF:000007">
    <property type="entry name" value="Gamma-aminobutyric acid type A receptor rho2 subunit"/>
    <property type="match status" value="1"/>
</dbReference>
<dbReference type="FunFam" id="1.20.58.390:FF:000005">
    <property type="entry name" value="Putative gamma-aminobutyric acid receptor subunit rho-2-like"/>
    <property type="match status" value="1"/>
</dbReference>
<dbReference type="Gene3D" id="2.70.170.10">
    <property type="entry name" value="Neurotransmitter-gated ion-channel ligand-binding domain"/>
    <property type="match status" value="1"/>
</dbReference>
<dbReference type="Gene3D" id="1.20.58.390">
    <property type="entry name" value="Neurotransmitter-gated ion-channel transmembrane domain"/>
    <property type="match status" value="1"/>
</dbReference>
<dbReference type="InterPro" id="IPR006028">
    <property type="entry name" value="GABAA/Glycine_rcpt"/>
</dbReference>
<dbReference type="InterPro" id="IPR006202">
    <property type="entry name" value="Neur_chan_lig-bd"/>
</dbReference>
<dbReference type="InterPro" id="IPR036734">
    <property type="entry name" value="Neur_chan_lig-bd_sf"/>
</dbReference>
<dbReference type="InterPro" id="IPR006201">
    <property type="entry name" value="Neur_channel"/>
</dbReference>
<dbReference type="InterPro" id="IPR036719">
    <property type="entry name" value="Neuro-gated_channel_TM_sf"/>
</dbReference>
<dbReference type="InterPro" id="IPR038050">
    <property type="entry name" value="Neuro_actylchol_rec"/>
</dbReference>
<dbReference type="InterPro" id="IPR006029">
    <property type="entry name" value="Neurotrans-gated_channel_TM"/>
</dbReference>
<dbReference type="InterPro" id="IPR018000">
    <property type="entry name" value="Neurotransmitter_ion_chnl_CS"/>
</dbReference>
<dbReference type="NCBIfam" id="TIGR00860">
    <property type="entry name" value="LIC"/>
    <property type="match status" value="1"/>
</dbReference>
<dbReference type="PANTHER" id="PTHR18945">
    <property type="entry name" value="NEUROTRANSMITTER GATED ION CHANNEL"/>
    <property type="match status" value="1"/>
</dbReference>
<dbReference type="Pfam" id="PF02931">
    <property type="entry name" value="Neur_chan_LBD"/>
    <property type="match status" value="1"/>
</dbReference>
<dbReference type="Pfam" id="PF02932">
    <property type="entry name" value="Neur_chan_memb"/>
    <property type="match status" value="1"/>
</dbReference>
<dbReference type="PRINTS" id="PR00253">
    <property type="entry name" value="GABAARECEPTR"/>
</dbReference>
<dbReference type="PRINTS" id="PR00252">
    <property type="entry name" value="NRIONCHANNEL"/>
</dbReference>
<dbReference type="SUPFAM" id="SSF90112">
    <property type="entry name" value="Neurotransmitter-gated ion-channel transmembrane pore"/>
    <property type="match status" value="1"/>
</dbReference>
<dbReference type="SUPFAM" id="SSF63712">
    <property type="entry name" value="Nicotinic receptor ligand binding domain-like"/>
    <property type="match status" value="1"/>
</dbReference>
<dbReference type="PROSITE" id="PS00236">
    <property type="entry name" value="NEUROTR_ION_CHANNEL"/>
    <property type="match status" value="1"/>
</dbReference>
<comment type="function">
    <text evidence="1 3">Rho subunit of the pentameric ligand-gated chloride channels responsible for mediating the effects of gamma-aminobutyric acid (GABA), the major inhibitory neurotransmitter in the brain (By similarity). Rho-containing GABA-gated chloride channels are a subclass of GABA(A) receptors (GABAARs) entirely composed of rho subunits, where GABA molecules bind at the rho intersubunit interfaces (By similarity). When activated by GABA, rho-GABAARs selectively allow the flow of chloride anions across the cell membrane down their electrochemical gradient (By similarity).</text>
</comment>
<comment type="catalytic activity">
    <reaction evidence="3">
        <text>chloride(in) = chloride(out)</text>
        <dbReference type="Rhea" id="RHEA:29823"/>
        <dbReference type="ChEBI" id="CHEBI:17996"/>
    </reaction>
</comment>
<comment type="activity regulation">
    <text evidence="3">Inhibited by TPMPA, a rho-specific antagonist, when forming a homopentamer.</text>
</comment>
<comment type="subunit">
    <text evidence="3">Three rho subunits (rho-1/GBRR1, rho-2/GBRR2 and rho-3/GBRR3) coassemble either to form functional homopentamers or heteropentamers. Forms a ternary complex with SQSTM1 and PRKCZ.</text>
</comment>
<comment type="subcellular location">
    <subcellularLocation>
        <location>Postsynaptic cell membrane</location>
        <topology evidence="4">Multi-pass membrane protein</topology>
    </subcellularLocation>
    <subcellularLocation>
        <location>Cell membrane</location>
        <topology evidence="4">Multi-pass membrane protein</topology>
    </subcellularLocation>
</comment>
<comment type="domain">
    <text evidence="1">GABAARs subunits share a common topological structure: a peptide sequence made up of a long extracellular N-terminal, four transmembrane domains, intracellular or cytoplasmic domain located between the third and the fourth transmembrane domains.</text>
</comment>
<comment type="polymorphism">
    <text evidence="7">The sequence shown in this entry differs from the translation of the reference genome assembly (GRCh38/hg38) due to a nonsense variant creating stop codon at position 205 in the reference genome. The sequence shown in this entry is that of variant p.Ter205Tyr, which has a frequency of about 79% in the human population according to the Genome Aggregation Database (gnomAD v3.1.2).</text>
</comment>
<comment type="similarity">
    <text evidence="7">Belongs to the ligand-gated ion channel (TC 1.A.9) family. Gamma-aminobutyric acid receptor (TC 1.A.9.5) subfamily. GABRR3 sub-subfamily.</text>
</comment>
<comment type="caution">
    <text evidence="7">The sequence shown in this entry differs from the translation of the reference genome assembly (GRCh38/hg38) due to a nonsense variant creating stop codon at position 205 in the reference genome.</text>
</comment>
<feature type="signal peptide" evidence="4">
    <location>
        <begin position="1"/>
        <end position="24"/>
    </location>
</feature>
<feature type="chain" id="PRO_0000332189" description="Gamma-aminobutyric acid receptor subunit rho-3" evidence="4">
    <location>
        <begin position="25"/>
        <end position="467"/>
    </location>
</feature>
<feature type="topological domain" description="Extracellular" evidence="7">
    <location>
        <begin position="25"/>
        <end position="266"/>
    </location>
</feature>
<feature type="transmembrane region" description="Helical" evidence="4">
    <location>
        <begin position="267"/>
        <end position="287"/>
    </location>
</feature>
<feature type="topological domain" description="Cytoplasmic" evidence="7">
    <location>
        <begin position="288"/>
        <end position="299"/>
    </location>
</feature>
<feature type="transmembrane region" description="Helical" evidence="4">
    <location>
        <begin position="300"/>
        <end position="320"/>
    </location>
</feature>
<feature type="topological domain" description="Extracellular" evidence="7">
    <location>
        <begin position="321"/>
        <end position="331"/>
    </location>
</feature>
<feature type="transmembrane region" description="Helical" evidence="4">
    <location>
        <begin position="332"/>
        <end position="352"/>
    </location>
</feature>
<feature type="topological domain" description="Cytoplasmic" evidence="7">
    <location>
        <begin position="353"/>
        <end position="446"/>
    </location>
</feature>
<feature type="transmembrane region" description="Helical" evidence="4">
    <location>
        <begin position="447"/>
        <end position="467"/>
    </location>
</feature>
<feature type="region of interest" description="Interaction with SQSTM1" evidence="3">
    <location>
        <begin position="347"/>
        <end position="448"/>
    </location>
</feature>
<feature type="binding site" description="in chain A" evidence="1">
    <location>
        <position position="111"/>
    </location>
    <ligand>
        <name>4-aminobutanoate</name>
        <dbReference type="ChEBI" id="CHEBI:59888"/>
        <note>ligand shared between two neighboring rho subunits</note>
    </ligand>
</feature>
<feature type="binding site" description="in chain A" evidence="1">
    <location>
        <position position="175"/>
    </location>
    <ligand>
        <name>4-aminobutanoate</name>
        <dbReference type="ChEBI" id="CHEBI:59888"/>
        <note>ligand shared between two neighboring rho subunits</note>
    </ligand>
</feature>
<feature type="binding site" description="in chain B" evidence="1">
    <location>
        <position position="203"/>
    </location>
    <ligand>
        <name>4-aminobutanoate</name>
        <dbReference type="ChEBI" id="CHEBI:59888"/>
        <note>ligand shared between two neighboring rho subunits</note>
    </ligand>
</feature>
<feature type="glycosylation site" description="N-linked (GlcNAc...) asparagine" evidence="4">
    <location>
        <position position="220"/>
    </location>
</feature>
<feature type="disulfide bond" evidence="2">
    <location>
        <begin position="184"/>
        <end position="198"/>
    </location>
</feature>
<feature type="sequence variant" id="VAR_088019" description="In dbSNP:rs832032." evidence="5">
    <location>
        <begin position="205"/>
        <end position="467"/>
    </location>
</feature>
<organism>
    <name type="scientific">Homo sapiens</name>
    <name type="common">Human</name>
    <dbReference type="NCBI Taxonomy" id="9606"/>
    <lineage>
        <taxon>Eukaryota</taxon>
        <taxon>Metazoa</taxon>
        <taxon>Chordata</taxon>
        <taxon>Craniata</taxon>
        <taxon>Vertebrata</taxon>
        <taxon>Euteleostomi</taxon>
        <taxon>Mammalia</taxon>
        <taxon>Eutheria</taxon>
        <taxon>Euarchontoglires</taxon>
        <taxon>Primates</taxon>
        <taxon>Haplorrhini</taxon>
        <taxon>Catarrhini</taxon>
        <taxon>Hominidae</taxon>
        <taxon>Homo</taxon>
    </lineage>
</organism>
<accession>A8MPY1</accession>
<accession>Q9UIV9</accession>
<reference key="1">
    <citation type="journal article" date="2006" name="Nature">
        <title>The DNA sequence, annotation and analysis of human chromosome 3.</title>
        <authorList>
            <person name="Muzny D.M."/>
            <person name="Scherer S.E."/>
            <person name="Kaul R."/>
            <person name="Wang J."/>
            <person name="Yu J."/>
            <person name="Sudbrak R."/>
            <person name="Buhay C.J."/>
            <person name="Chen R."/>
            <person name="Cree A."/>
            <person name="Ding Y."/>
            <person name="Dugan-Rocha S."/>
            <person name="Gill R."/>
            <person name="Gunaratne P."/>
            <person name="Harris R.A."/>
            <person name="Hawes A.C."/>
            <person name="Hernandez J."/>
            <person name="Hodgson A.V."/>
            <person name="Hume J."/>
            <person name="Jackson A."/>
            <person name="Khan Z.M."/>
            <person name="Kovar-Smith C."/>
            <person name="Lewis L.R."/>
            <person name="Lozado R.J."/>
            <person name="Metzker M.L."/>
            <person name="Milosavljevic A."/>
            <person name="Miner G.R."/>
            <person name="Morgan M.B."/>
            <person name="Nazareth L.V."/>
            <person name="Scott G."/>
            <person name="Sodergren E."/>
            <person name="Song X.-Z."/>
            <person name="Steffen D."/>
            <person name="Wei S."/>
            <person name="Wheeler D.A."/>
            <person name="Wright M.W."/>
            <person name="Worley K.C."/>
            <person name="Yuan Y."/>
            <person name="Zhang Z."/>
            <person name="Adams C.Q."/>
            <person name="Ansari-Lari M.A."/>
            <person name="Ayele M."/>
            <person name="Brown M.J."/>
            <person name="Chen G."/>
            <person name="Chen Z."/>
            <person name="Clendenning J."/>
            <person name="Clerc-Blankenburg K.P."/>
            <person name="Chen R."/>
            <person name="Chen Z."/>
            <person name="Davis C."/>
            <person name="Delgado O."/>
            <person name="Dinh H.H."/>
            <person name="Dong W."/>
            <person name="Draper H."/>
            <person name="Ernst S."/>
            <person name="Fu G."/>
            <person name="Gonzalez-Garay M.L."/>
            <person name="Garcia D.K."/>
            <person name="Gillett W."/>
            <person name="Gu J."/>
            <person name="Hao B."/>
            <person name="Haugen E."/>
            <person name="Havlak P."/>
            <person name="He X."/>
            <person name="Hennig S."/>
            <person name="Hu S."/>
            <person name="Huang W."/>
            <person name="Jackson L.R."/>
            <person name="Jacob L.S."/>
            <person name="Kelly S.H."/>
            <person name="Kube M."/>
            <person name="Levy R."/>
            <person name="Li Z."/>
            <person name="Liu B."/>
            <person name="Liu J."/>
            <person name="Liu W."/>
            <person name="Lu J."/>
            <person name="Maheshwari M."/>
            <person name="Nguyen B.-V."/>
            <person name="Okwuonu G.O."/>
            <person name="Palmeiri A."/>
            <person name="Pasternak S."/>
            <person name="Perez L.M."/>
            <person name="Phelps K.A."/>
            <person name="Plopper F.J."/>
            <person name="Qiang B."/>
            <person name="Raymond C."/>
            <person name="Rodriguez R."/>
            <person name="Saenphimmachak C."/>
            <person name="Santibanez J."/>
            <person name="Shen H."/>
            <person name="Shen Y."/>
            <person name="Subramanian S."/>
            <person name="Tabor P.E."/>
            <person name="Verduzco D."/>
            <person name="Waldron L."/>
            <person name="Wang J."/>
            <person name="Wang J."/>
            <person name="Wang Q."/>
            <person name="Williams G.A."/>
            <person name="Wong G.K.-S."/>
            <person name="Yao Z."/>
            <person name="Zhang J."/>
            <person name="Zhang X."/>
            <person name="Zhao G."/>
            <person name="Zhou J."/>
            <person name="Zhou Y."/>
            <person name="Nelson D."/>
            <person name="Lehrach H."/>
            <person name="Reinhardt R."/>
            <person name="Naylor S.L."/>
            <person name="Yang H."/>
            <person name="Olson M."/>
            <person name="Weinstock G."/>
            <person name="Gibbs R.A."/>
        </authorList>
    </citation>
    <scope>NUCLEOTIDE SEQUENCE [LARGE SCALE GENOMIC DNA]</scope>
    <scope>VARIANT 205-TYR--VAL-467 DEL</scope>
</reference>
<reference key="2">
    <citation type="journal article" date="1999" name="Biochim. Biophys. Acta">
        <title>Genetic linkage and radiation hybrid mapping of the three human GABA(C) receptor rho subunit genes: GABRR1, GABRR2 and GABRR3.</title>
        <authorList>
            <person name="Bailey M.E.S."/>
            <person name="Albrecht B.E."/>
            <person name="Johnson K.J."/>
            <person name="Darlison M.G."/>
        </authorList>
    </citation>
    <scope>NUCLEOTIDE SEQUENCE [GENOMIC DNA] OF 369-467</scope>
</reference>
<gene>
    <name evidence="8" type="primary">GABRR3</name>
</gene>
<proteinExistence type="inferred from homology"/>